<gene>
    <name type="primary">MT-CYB</name>
    <name type="synonym">COB</name>
    <name type="synonym">CYTB</name>
    <name type="synonym">MTCYB</name>
</gene>
<name>CYB_SAGOB</name>
<accession>Q9TDL8</accession>
<dbReference type="EMBL" id="AF084067">
    <property type="protein sequence ID" value="AAD54444.1"/>
    <property type="molecule type" value="Genomic_DNA"/>
</dbReference>
<dbReference type="SMR" id="Q9TDL8"/>
<dbReference type="GO" id="GO:0005743">
    <property type="term" value="C:mitochondrial inner membrane"/>
    <property type="evidence" value="ECO:0007669"/>
    <property type="project" value="UniProtKB-SubCell"/>
</dbReference>
<dbReference type="GO" id="GO:0045275">
    <property type="term" value="C:respiratory chain complex III"/>
    <property type="evidence" value="ECO:0007669"/>
    <property type="project" value="InterPro"/>
</dbReference>
<dbReference type="GO" id="GO:0046872">
    <property type="term" value="F:metal ion binding"/>
    <property type="evidence" value="ECO:0007669"/>
    <property type="project" value="UniProtKB-KW"/>
</dbReference>
<dbReference type="GO" id="GO:0008121">
    <property type="term" value="F:ubiquinol-cytochrome-c reductase activity"/>
    <property type="evidence" value="ECO:0007669"/>
    <property type="project" value="InterPro"/>
</dbReference>
<dbReference type="GO" id="GO:0006122">
    <property type="term" value="P:mitochondrial electron transport, ubiquinol to cytochrome c"/>
    <property type="evidence" value="ECO:0007669"/>
    <property type="project" value="TreeGrafter"/>
</dbReference>
<dbReference type="CDD" id="cd00290">
    <property type="entry name" value="cytochrome_b_C"/>
    <property type="match status" value="1"/>
</dbReference>
<dbReference type="CDD" id="cd00284">
    <property type="entry name" value="Cytochrome_b_N"/>
    <property type="match status" value="1"/>
</dbReference>
<dbReference type="FunFam" id="1.20.810.10:FF:000002">
    <property type="entry name" value="Cytochrome b"/>
    <property type="match status" value="1"/>
</dbReference>
<dbReference type="Gene3D" id="1.20.810.10">
    <property type="entry name" value="Cytochrome Bc1 Complex, Chain C"/>
    <property type="match status" value="1"/>
</dbReference>
<dbReference type="InterPro" id="IPR005798">
    <property type="entry name" value="Cyt_b/b6_C"/>
</dbReference>
<dbReference type="InterPro" id="IPR036150">
    <property type="entry name" value="Cyt_b/b6_C_sf"/>
</dbReference>
<dbReference type="InterPro" id="IPR005797">
    <property type="entry name" value="Cyt_b/b6_N"/>
</dbReference>
<dbReference type="InterPro" id="IPR027387">
    <property type="entry name" value="Cytb/b6-like_sf"/>
</dbReference>
<dbReference type="InterPro" id="IPR030689">
    <property type="entry name" value="Cytochrome_b"/>
</dbReference>
<dbReference type="InterPro" id="IPR048260">
    <property type="entry name" value="Cytochrome_b_C_euk/bac"/>
</dbReference>
<dbReference type="InterPro" id="IPR048259">
    <property type="entry name" value="Cytochrome_b_N_euk/bac"/>
</dbReference>
<dbReference type="InterPro" id="IPR016174">
    <property type="entry name" value="Di-haem_cyt_TM"/>
</dbReference>
<dbReference type="PANTHER" id="PTHR19271">
    <property type="entry name" value="CYTOCHROME B"/>
    <property type="match status" value="1"/>
</dbReference>
<dbReference type="PANTHER" id="PTHR19271:SF16">
    <property type="entry name" value="CYTOCHROME B"/>
    <property type="match status" value="1"/>
</dbReference>
<dbReference type="Pfam" id="PF00032">
    <property type="entry name" value="Cytochrom_B_C"/>
    <property type="match status" value="1"/>
</dbReference>
<dbReference type="Pfam" id="PF00033">
    <property type="entry name" value="Cytochrome_B"/>
    <property type="match status" value="1"/>
</dbReference>
<dbReference type="PIRSF" id="PIRSF038885">
    <property type="entry name" value="COB"/>
    <property type="match status" value="1"/>
</dbReference>
<dbReference type="SUPFAM" id="SSF81648">
    <property type="entry name" value="a domain/subunit of cytochrome bc1 complex (Ubiquinol-cytochrome c reductase)"/>
    <property type="match status" value="1"/>
</dbReference>
<dbReference type="SUPFAM" id="SSF81342">
    <property type="entry name" value="Transmembrane di-heme cytochromes"/>
    <property type="match status" value="1"/>
</dbReference>
<dbReference type="PROSITE" id="PS51003">
    <property type="entry name" value="CYTB_CTER"/>
    <property type="match status" value="1"/>
</dbReference>
<dbReference type="PROSITE" id="PS51002">
    <property type="entry name" value="CYTB_NTER"/>
    <property type="match status" value="1"/>
</dbReference>
<comment type="function">
    <text evidence="2">Component of the ubiquinol-cytochrome c reductase complex (complex III or cytochrome b-c1 complex) that is part of the mitochondrial respiratory chain. The b-c1 complex mediates electron transfer from ubiquinol to cytochrome c. Contributes to the generation of a proton gradient across the mitochondrial membrane that is then used for ATP synthesis.</text>
</comment>
<comment type="cofactor">
    <cofactor evidence="2">
        <name>heme b</name>
        <dbReference type="ChEBI" id="CHEBI:60344"/>
    </cofactor>
    <text evidence="2">Binds 2 heme b groups non-covalently.</text>
</comment>
<comment type="subunit">
    <text evidence="2">The cytochrome bc1 complex contains 11 subunits: 3 respiratory subunits (MT-CYB, CYC1 and UQCRFS1), 2 core proteins (UQCRC1 and UQCRC2) and 6 low-molecular weight proteins (UQCRH/QCR6, UQCRB/QCR7, UQCRQ/QCR8, UQCR10/QCR9, UQCR11/QCR10 and a cleavage product of UQCRFS1). This cytochrome bc1 complex then forms a dimer.</text>
</comment>
<comment type="subcellular location">
    <subcellularLocation>
        <location evidence="2">Mitochondrion inner membrane</location>
        <topology evidence="2">Multi-pass membrane protein</topology>
    </subcellularLocation>
</comment>
<comment type="miscellaneous">
    <text evidence="1">Heme 1 (or BL or b562) is low-potential and absorbs at about 562 nm, and heme 2 (or BH or b566) is high-potential and absorbs at about 566 nm.</text>
</comment>
<comment type="similarity">
    <text evidence="3 4">Belongs to the cytochrome b family.</text>
</comment>
<comment type="caution">
    <text evidence="2">The full-length protein contains only eight transmembrane helices, not nine as predicted by bioinformatics tools.</text>
</comment>
<sequence length="379" mass="42824">MTNIRKTHPLMKILNDAFIDLPTPSNISSWWNFGSLLGLCLIMQILTGLFLAMHYTPDTSTAFSSVAHICRDVNYGWFIRYLHANGASMFFICLYAHIGRGLYYGSYMFQETWNIGVLLLLTVMATAFVGYVLPWGQMSFWGATVITNLLSAIPYIGTTLVEWIWGGFSVDKATLTRFFAFHFILPFIITALAAVHLLFLHETGSNNPTGIPSNMDMIPFHPYYTIKDILGALFLILTLLALTLFTPDLLGDPDNYTPANPLSTPAHIKPEWYFLFAYAILRSIPNKLGGVLALLLSILILVFIPMLQTSKQRSMMFRPFSQLLFWTLIADLLTLTWIGGQPVEHPYIIVGQLASILYFFLILVLMPTVSLIENKLLKW</sequence>
<geneLocation type="mitochondrion"/>
<reference key="1">
    <citation type="journal article" date="1999" name="Mar. Mamm. Sci.">
        <title>Phylogenetic relationships among the delphinid cetaceans based on full cytochrome b sequences.</title>
        <authorList>
            <person name="LeDuc R.G."/>
            <person name="Perrin W.F."/>
            <person name="Dizon A.E."/>
        </authorList>
    </citation>
    <scope>NUCLEOTIDE SEQUENCE [GENOMIC DNA]</scope>
</reference>
<feature type="chain" id="PRO_0000061083" description="Cytochrome b">
    <location>
        <begin position="1"/>
        <end position="379"/>
    </location>
</feature>
<feature type="transmembrane region" description="Helical" evidence="2">
    <location>
        <begin position="33"/>
        <end position="53"/>
    </location>
</feature>
<feature type="transmembrane region" description="Helical" evidence="2">
    <location>
        <begin position="77"/>
        <end position="98"/>
    </location>
</feature>
<feature type="transmembrane region" description="Helical" evidence="2">
    <location>
        <begin position="113"/>
        <end position="133"/>
    </location>
</feature>
<feature type="transmembrane region" description="Helical" evidence="2">
    <location>
        <begin position="178"/>
        <end position="198"/>
    </location>
</feature>
<feature type="transmembrane region" description="Helical" evidence="2">
    <location>
        <begin position="226"/>
        <end position="246"/>
    </location>
</feature>
<feature type="transmembrane region" description="Helical" evidence="2">
    <location>
        <begin position="288"/>
        <end position="308"/>
    </location>
</feature>
<feature type="transmembrane region" description="Helical" evidence="2">
    <location>
        <begin position="320"/>
        <end position="340"/>
    </location>
</feature>
<feature type="transmembrane region" description="Helical" evidence="2">
    <location>
        <begin position="347"/>
        <end position="367"/>
    </location>
</feature>
<feature type="binding site" description="axial binding residue" evidence="2">
    <location>
        <position position="83"/>
    </location>
    <ligand>
        <name>heme b</name>
        <dbReference type="ChEBI" id="CHEBI:60344"/>
        <label>b562</label>
    </ligand>
    <ligandPart>
        <name>Fe</name>
        <dbReference type="ChEBI" id="CHEBI:18248"/>
    </ligandPart>
</feature>
<feature type="binding site" description="axial binding residue" evidence="2">
    <location>
        <position position="97"/>
    </location>
    <ligand>
        <name>heme b</name>
        <dbReference type="ChEBI" id="CHEBI:60344"/>
        <label>b566</label>
    </ligand>
    <ligandPart>
        <name>Fe</name>
        <dbReference type="ChEBI" id="CHEBI:18248"/>
    </ligandPart>
</feature>
<feature type="binding site" description="axial binding residue" evidence="2">
    <location>
        <position position="182"/>
    </location>
    <ligand>
        <name>heme b</name>
        <dbReference type="ChEBI" id="CHEBI:60344"/>
        <label>b562</label>
    </ligand>
    <ligandPart>
        <name>Fe</name>
        <dbReference type="ChEBI" id="CHEBI:18248"/>
    </ligandPart>
</feature>
<feature type="binding site" description="axial binding residue" evidence="2">
    <location>
        <position position="196"/>
    </location>
    <ligand>
        <name>heme b</name>
        <dbReference type="ChEBI" id="CHEBI:60344"/>
        <label>b566</label>
    </ligand>
    <ligandPart>
        <name>Fe</name>
        <dbReference type="ChEBI" id="CHEBI:18248"/>
    </ligandPart>
</feature>
<feature type="binding site" evidence="2">
    <location>
        <position position="201"/>
    </location>
    <ligand>
        <name>a ubiquinone</name>
        <dbReference type="ChEBI" id="CHEBI:16389"/>
    </ligand>
</feature>
<protein>
    <recommendedName>
        <fullName>Cytochrome b</fullName>
    </recommendedName>
    <alternativeName>
        <fullName>Complex III subunit 3</fullName>
    </alternativeName>
    <alternativeName>
        <fullName>Complex III subunit III</fullName>
    </alternativeName>
    <alternativeName>
        <fullName>Cytochrome b-c1 complex subunit 3</fullName>
    </alternativeName>
    <alternativeName>
        <fullName>Ubiquinol-cytochrome-c reductase complex cytochrome b subunit</fullName>
    </alternativeName>
</protein>
<organism>
    <name type="scientific">Sagmatias obliquidens</name>
    <name type="common">Pacific white-sided dolphin</name>
    <name type="synonym">Lagenorhynchus obliquidens</name>
    <dbReference type="NCBI Taxonomy" id="3371155"/>
    <lineage>
        <taxon>Eukaryota</taxon>
        <taxon>Metazoa</taxon>
        <taxon>Chordata</taxon>
        <taxon>Craniata</taxon>
        <taxon>Vertebrata</taxon>
        <taxon>Euteleostomi</taxon>
        <taxon>Mammalia</taxon>
        <taxon>Eutheria</taxon>
        <taxon>Laurasiatheria</taxon>
        <taxon>Artiodactyla</taxon>
        <taxon>Whippomorpha</taxon>
        <taxon>Cetacea</taxon>
        <taxon>Odontoceti</taxon>
        <taxon>Delphinidae</taxon>
        <taxon>Sagmatias</taxon>
    </lineage>
</organism>
<proteinExistence type="inferred from homology"/>
<evidence type="ECO:0000250" key="1"/>
<evidence type="ECO:0000250" key="2">
    <source>
        <dbReference type="UniProtKB" id="P00157"/>
    </source>
</evidence>
<evidence type="ECO:0000255" key="3">
    <source>
        <dbReference type="PROSITE-ProRule" id="PRU00967"/>
    </source>
</evidence>
<evidence type="ECO:0000255" key="4">
    <source>
        <dbReference type="PROSITE-ProRule" id="PRU00968"/>
    </source>
</evidence>
<keyword id="KW-0249">Electron transport</keyword>
<keyword id="KW-0349">Heme</keyword>
<keyword id="KW-0408">Iron</keyword>
<keyword id="KW-0472">Membrane</keyword>
<keyword id="KW-0479">Metal-binding</keyword>
<keyword id="KW-0496">Mitochondrion</keyword>
<keyword id="KW-0999">Mitochondrion inner membrane</keyword>
<keyword id="KW-0679">Respiratory chain</keyword>
<keyword id="KW-0812">Transmembrane</keyword>
<keyword id="KW-1133">Transmembrane helix</keyword>
<keyword id="KW-0813">Transport</keyword>
<keyword id="KW-0830">Ubiquinone</keyword>